<keyword id="KW-0158">Chromosome</keyword>
<keyword id="KW-0903">Direct protein sequencing</keyword>
<keyword id="KW-0238">DNA-binding</keyword>
<keyword id="KW-0325">Glycoprotein</keyword>
<keyword id="KW-1017">Isopeptide bond</keyword>
<keyword id="KW-0488">Methylation</keyword>
<keyword id="KW-0544">Nucleosome core</keyword>
<keyword id="KW-0539">Nucleus</keyword>
<keyword id="KW-0832">Ubl conjugation</keyword>
<reference key="1">
    <citation type="journal article" date="1991" name="Eur. J. Biochem.">
        <title>Complete sequence of Sipunculus nudus erythrocyte histone H2B and its gene. Identification of an N,N-dimethylproline residue at the amino-terminus.</title>
        <authorList>
            <person name="Kmiecik D."/>
            <person name="Belaiche D."/>
            <person name="Sautiere P."/>
            <person name="Loucheux-Lefebvre M.-H."/>
            <person name="Kerckaert J.-P."/>
        </authorList>
    </citation>
    <scope>NUCLEOTIDE SEQUENCE</scope>
    <scope>PROTEIN SEQUENCE OF 2-6 AND 19-123</scope>
    <scope>METHYLATION AT PRO-2</scope>
    <source>
        <tissue>Erythrocyte</tissue>
    </source>
</reference>
<gene>
    <name type="primary">H2B</name>
</gene>
<proteinExistence type="evidence at protein level"/>
<comment type="function">
    <text>Core component of nucleosome. Nucleosomes wrap and compact DNA into chromatin, limiting DNA accessibility to the cellular machineries which require DNA as a template. Histones thereby play a central role in transcription regulation, DNA repair, DNA replication and chromosomal stability. DNA accessibility is regulated via a complex set of post-translational modifications of histones, also called histone code, and nucleosome remodeling.</text>
</comment>
<comment type="subunit">
    <text>The nucleosome is a histone octamer containing two molecules each of H2A, H2B, H3 and H4 assembled in one H3-H4 heterotetramer and two H2A-H2B heterodimers. The octamer wraps approximately 147 bp of DNA.</text>
</comment>
<comment type="subcellular location">
    <subcellularLocation>
        <location>Nucleus</location>
    </subcellularLocation>
    <subcellularLocation>
        <location>Chromosome</location>
    </subcellularLocation>
</comment>
<comment type="PTM">
    <text evidence="1">Monoubiquitination of Lys-118 gives a specific tag for epigenetic transcriptional activation and is also prerequisite for histone H3 'Lys-4' and 'Lys-79' methylation.</text>
</comment>
<comment type="PTM">
    <text evidence="1">GlcNAcylation at Ser-110 promotes monoubiquitination of Lys-118 It fluctuates in response to extracellular glucose, and associates with transcribed genes.</text>
</comment>
<comment type="similarity">
    <text evidence="4">Belongs to the histone H2B family.</text>
</comment>
<organism>
    <name type="scientific">Sipunculus nudus</name>
    <name type="common">Sipunculan worm</name>
    <dbReference type="NCBI Taxonomy" id="6446"/>
    <lineage>
        <taxon>Eukaryota</taxon>
        <taxon>Metazoa</taxon>
        <taxon>Spiralia</taxon>
        <taxon>Lophotrochozoa</taxon>
        <taxon>Annelida</taxon>
        <taxon>Sipuncula</taxon>
        <taxon>Sipunculidea</taxon>
        <taxon>Golfingiida</taxon>
        <taxon>Sipunculidae</taxon>
        <taxon>Sipunculus</taxon>
    </lineage>
</organism>
<evidence type="ECO:0000250" key="1"/>
<evidence type="ECO:0000256" key="2">
    <source>
        <dbReference type="SAM" id="MobiDB-lite"/>
    </source>
</evidence>
<evidence type="ECO:0000269" key="3">
    <source>
    </source>
</evidence>
<evidence type="ECO:0000305" key="4"/>
<sequence>MPPKPSAKGAKKAASKAKAARTGDKKRRKRRKESYSIYIYKVLKQVHPDTGISSKAMSIMNSFVNDIFERIAAEASRLAHYNRRSTITSREIQTAVRLLLPGELAKHAVSEGTKAVTKYTSSK</sequence>
<protein>
    <recommendedName>
        <fullName>Histone H2B</fullName>
    </recommendedName>
</protein>
<feature type="initiator methionine" description="Removed" evidence="3">
    <location>
        <position position="1"/>
    </location>
</feature>
<feature type="chain" id="PRO_0000071873" description="Histone H2B">
    <location>
        <begin position="2"/>
        <end position="123"/>
    </location>
</feature>
<feature type="region of interest" description="Disordered" evidence="2">
    <location>
        <begin position="1"/>
        <end position="32"/>
    </location>
</feature>
<feature type="compositionally biased region" description="Basic residues" evidence="2">
    <location>
        <begin position="9"/>
        <end position="32"/>
    </location>
</feature>
<feature type="modified residue" description="N,N-dimethylproline" evidence="3">
    <location>
        <position position="2"/>
    </location>
</feature>
<feature type="glycosylation site" description="O-linked (GlcNAc) serine" evidence="1">
    <location>
        <position position="110"/>
    </location>
</feature>
<feature type="cross-link" description="Glycyl lysine isopeptide (Lys-Gly) (interchain with G-Cter in ubiquitin)" evidence="1">
    <location>
        <position position="118"/>
    </location>
</feature>
<name>H2B_SIPNU</name>
<dbReference type="PIR" id="S16084">
    <property type="entry name" value="S16084"/>
</dbReference>
<dbReference type="SMR" id="P30757"/>
<dbReference type="GlyCosmos" id="P30757">
    <property type="glycosylation" value="1 site, No reported glycans"/>
</dbReference>
<dbReference type="iPTMnet" id="P30757"/>
<dbReference type="GO" id="GO:0000786">
    <property type="term" value="C:nucleosome"/>
    <property type="evidence" value="ECO:0007669"/>
    <property type="project" value="UniProtKB-KW"/>
</dbReference>
<dbReference type="GO" id="GO:0005634">
    <property type="term" value="C:nucleus"/>
    <property type="evidence" value="ECO:0007669"/>
    <property type="project" value="UniProtKB-SubCell"/>
</dbReference>
<dbReference type="GO" id="GO:0003677">
    <property type="term" value="F:DNA binding"/>
    <property type="evidence" value="ECO:0007669"/>
    <property type="project" value="UniProtKB-KW"/>
</dbReference>
<dbReference type="GO" id="GO:0046982">
    <property type="term" value="F:protein heterodimerization activity"/>
    <property type="evidence" value="ECO:0007669"/>
    <property type="project" value="InterPro"/>
</dbReference>
<dbReference type="GO" id="GO:0044877">
    <property type="term" value="F:protein-containing complex binding"/>
    <property type="evidence" value="ECO:0000250"/>
    <property type="project" value="UniProtKB"/>
</dbReference>
<dbReference type="GO" id="GO:0030527">
    <property type="term" value="F:structural constituent of chromatin"/>
    <property type="evidence" value="ECO:0007669"/>
    <property type="project" value="InterPro"/>
</dbReference>
<dbReference type="CDD" id="cd22910">
    <property type="entry name" value="HFD_H2B"/>
    <property type="match status" value="1"/>
</dbReference>
<dbReference type="FunFam" id="1.10.20.10:FF:000016">
    <property type="entry name" value="Histone H2B"/>
    <property type="match status" value="1"/>
</dbReference>
<dbReference type="Gene3D" id="1.10.20.10">
    <property type="entry name" value="Histone, subunit A"/>
    <property type="match status" value="1"/>
</dbReference>
<dbReference type="InterPro" id="IPR009072">
    <property type="entry name" value="Histone-fold"/>
</dbReference>
<dbReference type="InterPro" id="IPR007125">
    <property type="entry name" value="Histone_H2A/H2B/H3"/>
</dbReference>
<dbReference type="InterPro" id="IPR000558">
    <property type="entry name" value="Histone_H2B"/>
</dbReference>
<dbReference type="InterPro" id="IPR055333">
    <property type="entry name" value="HISTONE_H2B_site"/>
</dbReference>
<dbReference type="PANTHER" id="PTHR23428">
    <property type="entry name" value="HISTONE H2B"/>
    <property type="match status" value="1"/>
</dbReference>
<dbReference type="Pfam" id="PF00125">
    <property type="entry name" value="Histone"/>
    <property type="match status" value="1"/>
</dbReference>
<dbReference type="PRINTS" id="PR00621">
    <property type="entry name" value="HISTONEH2B"/>
</dbReference>
<dbReference type="SMART" id="SM00427">
    <property type="entry name" value="H2B"/>
    <property type="match status" value="1"/>
</dbReference>
<dbReference type="SUPFAM" id="SSF47113">
    <property type="entry name" value="Histone-fold"/>
    <property type="match status" value="1"/>
</dbReference>
<dbReference type="PROSITE" id="PS00357">
    <property type="entry name" value="HISTONE_H2B"/>
    <property type="match status" value="1"/>
</dbReference>
<accession>P30757</accession>